<feature type="chain" id="PRO_0000057396" description="tRNA pseudouridine synthase A">
    <location>
        <begin position="1"/>
        <end position="262"/>
    </location>
</feature>
<feature type="active site" description="Nucleophile" evidence="1">
    <location>
        <position position="56"/>
    </location>
</feature>
<feature type="binding site" evidence="1">
    <location>
        <position position="114"/>
    </location>
    <ligand>
        <name>substrate</name>
    </ligand>
</feature>
<accession>Q88XU9</accession>
<accession>F9UMP3</accession>
<protein>
    <recommendedName>
        <fullName evidence="1">tRNA pseudouridine synthase A</fullName>
        <ecNumber evidence="1">5.4.99.12</ecNumber>
    </recommendedName>
    <alternativeName>
        <fullName evidence="1">tRNA pseudouridine(38-40) synthase</fullName>
    </alternativeName>
    <alternativeName>
        <fullName evidence="1">tRNA pseudouridylate synthase I</fullName>
    </alternativeName>
    <alternativeName>
        <fullName evidence="1">tRNA-uridine isomerase I</fullName>
    </alternativeName>
</protein>
<dbReference type="EC" id="5.4.99.12" evidence="1"/>
<dbReference type="EMBL" id="AL935263">
    <property type="protein sequence ID" value="CCC78482.1"/>
    <property type="molecule type" value="Genomic_DNA"/>
</dbReference>
<dbReference type="RefSeq" id="WP_003644097.1">
    <property type="nucleotide sequence ID" value="NC_004567.2"/>
</dbReference>
<dbReference type="RefSeq" id="YP_004888996.1">
    <property type="nucleotide sequence ID" value="NC_004567.2"/>
</dbReference>
<dbReference type="SMR" id="Q88XU9"/>
<dbReference type="STRING" id="220668.lp_1076"/>
<dbReference type="EnsemblBacteria" id="CCC78482">
    <property type="protein sequence ID" value="CCC78482"/>
    <property type="gene ID" value="lp_1076"/>
</dbReference>
<dbReference type="KEGG" id="lpl:lp_1076"/>
<dbReference type="PATRIC" id="fig|220668.9.peg.911"/>
<dbReference type="eggNOG" id="COG0101">
    <property type="taxonomic scope" value="Bacteria"/>
</dbReference>
<dbReference type="HOGENOM" id="CLU_014673_0_1_9"/>
<dbReference type="OrthoDB" id="9811823at2"/>
<dbReference type="PhylomeDB" id="Q88XU9"/>
<dbReference type="Proteomes" id="UP000000432">
    <property type="component" value="Chromosome"/>
</dbReference>
<dbReference type="GO" id="GO:0003723">
    <property type="term" value="F:RNA binding"/>
    <property type="evidence" value="ECO:0007669"/>
    <property type="project" value="InterPro"/>
</dbReference>
<dbReference type="GO" id="GO:0160147">
    <property type="term" value="F:tRNA pseudouridine(38-40) synthase activity"/>
    <property type="evidence" value="ECO:0007669"/>
    <property type="project" value="UniProtKB-EC"/>
</dbReference>
<dbReference type="GO" id="GO:0031119">
    <property type="term" value="P:tRNA pseudouridine synthesis"/>
    <property type="evidence" value="ECO:0007669"/>
    <property type="project" value="UniProtKB-UniRule"/>
</dbReference>
<dbReference type="CDD" id="cd02570">
    <property type="entry name" value="PseudoU_synth_EcTruA"/>
    <property type="match status" value="1"/>
</dbReference>
<dbReference type="FunFam" id="3.30.70.580:FF:000001">
    <property type="entry name" value="tRNA pseudouridine synthase A"/>
    <property type="match status" value="1"/>
</dbReference>
<dbReference type="Gene3D" id="3.30.70.660">
    <property type="entry name" value="Pseudouridine synthase I, catalytic domain, C-terminal subdomain"/>
    <property type="match status" value="1"/>
</dbReference>
<dbReference type="Gene3D" id="3.30.70.580">
    <property type="entry name" value="Pseudouridine synthase I, catalytic domain, N-terminal subdomain"/>
    <property type="match status" value="1"/>
</dbReference>
<dbReference type="HAMAP" id="MF_00171">
    <property type="entry name" value="TruA"/>
    <property type="match status" value="1"/>
</dbReference>
<dbReference type="InterPro" id="IPR020103">
    <property type="entry name" value="PsdUridine_synth_cat_dom_sf"/>
</dbReference>
<dbReference type="InterPro" id="IPR001406">
    <property type="entry name" value="PsdUridine_synth_TruA"/>
</dbReference>
<dbReference type="InterPro" id="IPR020097">
    <property type="entry name" value="PsdUridine_synth_TruA_a/b_dom"/>
</dbReference>
<dbReference type="InterPro" id="IPR020095">
    <property type="entry name" value="PsdUridine_synth_TruA_C"/>
</dbReference>
<dbReference type="InterPro" id="IPR020094">
    <property type="entry name" value="TruA/RsuA/RluB/E/F_N"/>
</dbReference>
<dbReference type="NCBIfam" id="TIGR00071">
    <property type="entry name" value="hisT_truA"/>
    <property type="match status" value="1"/>
</dbReference>
<dbReference type="PANTHER" id="PTHR11142">
    <property type="entry name" value="PSEUDOURIDYLATE SYNTHASE"/>
    <property type="match status" value="1"/>
</dbReference>
<dbReference type="PANTHER" id="PTHR11142:SF0">
    <property type="entry name" value="TRNA PSEUDOURIDINE SYNTHASE-LIKE 1"/>
    <property type="match status" value="1"/>
</dbReference>
<dbReference type="Pfam" id="PF01416">
    <property type="entry name" value="PseudoU_synth_1"/>
    <property type="match status" value="2"/>
</dbReference>
<dbReference type="PIRSF" id="PIRSF001430">
    <property type="entry name" value="tRNA_psdUrid_synth"/>
    <property type="match status" value="1"/>
</dbReference>
<dbReference type="SUPFAM" id="SSF55120">
    <property type="entry name" value="Pseudouridine synthase"/>
    <property type="match status" value="1"/>
</dbReference>
<keyword id="KW-0413">Isomerase</keyword>
<keyword id="KW-1185">Reference proteome</keyword>
<keyword id="KW-0819">tRNA processing</keyword>
<name>TRUA_LACPL</name>
<sequence>MTTRYKVVLAYDGTNFAGFQRQPHQRTVEQVVTKAVNKMAKDPVEPIVIYGAGRTDAGVHAFGQTLHFDLPYEINPEGVRRGLNSMLPMDTIVKAVSIVPNDFHARYDTVGKRYWYRAYQNEFVDPFKRHYTGHFKFAADIDRIQQAIGDLEGRHDFSTFVASGSQAHDHVREIYSAKAWALPDEREIQFEFCGSGFLYNQVRIMVAVLMEIGQGRRAVDCIPALLAAKDREQARGTAPAAGLYMKKVYYEQNELQADLIKY</sequence>
<organism>
    <name type="scientific">Lactiplantibacillus plantarum (strain ATCC BAA-793 / NCIMB 8826 / WCFS1)</name>
    <name type="common">Lactobacillus plantarum</name>
    <dbReference type="NCBI Taxonomy" id="220668"/>
    <lineage>
        <taxon>Bacteria</taxon>
        <taxon>Bacillati</taxon>
        <taxon>Bacillota</taxon>
        <taxon>Bacilli</taxon>
        <taxon>Lactobacillales</taxon>
        <taxon>Lactobacillaceae</taxon>
        <taxon>Lactiplantibacillus</taxon>
    </lineage>
</organism>
<evidence type="ECO:0000255" key="1">
    <source>
        <dbReference type="HAMAP-Rule" id="MF_00171"/>
    </source>
</evidence>
<gene>
    <name evidence="1" type="primary">truA</name>
    <name type="ordered locus">lp_1076</name>
</gene>
<proteinExistence type="inferred from homology"/>
<comment type="function">
    <text evidence="1">Formation of pseudouridine at positions 38, 39 and 40 in the anticodon stem and loop of transfer RNAs.</text>
</comment>
<comment type="catalytic activity">
    <reaction evidence="1">
        <text>uridine(38/39/40) in tRNA = pseudouridine(38/39/40) in tRNA</text>
        <dbReference type="Rhea" id="RHEA:22376"/>
        <dbReference type="Rhea" id="RHEA-COMP:10085"/>
        <dbReference type="Rhea" id="RHEA-COMP:10087"/>
        <dbReference type="ChEBI" id="CHEBI:65314"/>
        <dbReference type="ChEBI" id="CHEBI:65315"/>
        <dbReference type="EC" id="5.4.99.12"/>
    </reaction>
</comment>
<comment type="subunit">
    <text evidence="1">Homodimer.</text>
</comment>
<comment type="similarity">
    <text evidence="1">Belongs to the tRNA pseudouridine synthase TruA family.</text>
</comment>
<reference key="1">
    <citation type="journal article" date="2003" name="Proc. Natl. Acad. Sci. U.S.A.">
        <title>Complete genome sequence of Lactobacillus plantarum WCFS1.</title>
        <authorList>
            <person name="Kleerebezem M."/>
            <person name="Boekhorst J."/>
            <person name="van Kranenburg R."/>
            <person name="Molenaar D."/>
            <person name="Kuipers O.P."/>
            <person name="Leer R."/>
            <person name="Tarchini R."/>
            <person name="Peters S.A."/>
            <person name="Sandbrink H.M."/>
            <person name="Fiers M.W.E.J."/>
            <person name="Stiekema W."/>
            <person name="Klein Lankhorst R.M."/>
            <person name="Bron P.A."/>
            <person name="Hoffer S.M."/>
            <person name="Nierop Groot M.N."/>
            <person name="Kerkhoven R."/>
            <person name="De Vries M."/>
            <person name="Ursing B."/>
            <person name="De Vos W.M."/>
            <person name="Siezen R.J."/>
        </authorList>
    </citation>
    <scope>NUCLEOTIDE SEQUENCE [LARGE SCALE GENOMIC DNA]</scope>
    <source>
        <strain>ATCC BAA-793 / NCIMB 8826 / WCFS1</strain>
    </source>
</reference>
<reference key="2">
    <citation type="journal article" date="2012" name="J. Bacteriol.">
        <title>Complete resequencing and reannotation of the Lactobacillus plantarum WCFS1 genome.</title>
        <authorList>
            <person name="Siezen R.J."/>
            <person name="Francke C."/>
            <person name="Renckens B."/>
            <person name="Boekhorst J."/>
            <person name="Wels M."/>
            <person name="Kleerebezem M."/>
            <person name="van Hijum S.A."/>
        </authorList>
    </citation>
    <scope>NUCLEOTIDE SEQUENCE [LARGE SCALE GENOMIC DNA]</scope>
    <scope>GENOME REANNOTATION</scope>
    <source>
        <strain>ATCC BAA-793 / NCIMB 8826 / WCFS1</strain>
    </source>
</reference>